<evidence type="ECO:0000250" key="1"/>
<evidence type="ECO:0000269" key="2">
    <source>
    </source>
</evidence>
<evidence type="ECO:0000269" key="3">
    <source>
    </source>
</evidence>
<evidence type="ECO:0000269" key="4">
    <source>
    </source>
</evidence>
<evidence type="ECO:0000269" key="5">
    <source>
    </source>
</evidence>
<evidence type="ECO:0000269" key="6">
    <source>
    </source>
</evidence>
<evidence type="ECO:0000269" key="7">
    <source>
    </source>
</evidence>
<evidence type="ECO:0000269" key="8">
    <source>
    </source>
</evidence>
<evidence type="ECO:0000303" key="9">
    <source>
    </source>
</evidence>
<evidence type="ECO:0000305" key="10"/>
<evidence type="ECO:0000305" key="11">
    <source>
    </source>
</evidence>
<evidence type="ECO:0007744" key="12">
    <source>
    </source>
</evidence>
<organism>
    <name type="scientific">Mycobacterium tuberculosis (strain ATCC 25618 / H37Rv)</name>
    <dbReference type="NCBI Taxonomy" id="83332"/>
    <lineage>
        <taxon>Bacteria</taxon>
        <taxon>Bacillati</taxon>
        <taxon>Actinomycetota</taxon>
        <taxon>Actinomycetes</taxon>
        <taxon>Mycobacteriales</taxon>
        <taxon>Mycobacteriaceae</taxon>
        <taxon>Mycobacterium</taxon>
        <taxon>Mycobacterium tuberculosis complex</taxon>
    </lineage>
</organism>
<sequence>MTEPAAWDEGKPRIITLTMNPALDITTSVDVVRPTEKMRCGAPRYDPGGGGINVARIVHVLGGCSTALFPAGGSTGSLLMALLGDAGVPFRVIPIAASTRESFTVNESRTAKQYRFVLPGPSLTVAEQEQCLDELRGAAASAAFVVASGSLPPGVAADYYQRVADICRRSSTPLILDTSGGGLQHISSGVFLLKASVRELRECVGSELLTEPEQLAAAHELIDRGRAEVVVVSLGSQGALLATRHASHRFSSIPMTAVSGVGAGDAMVAAITVGLSRGWSLIKSVRLGNAAGAAMLLTPGTAACNRDDVERFFELAAEPTEVGQDQYVWHPIVNPEASP</sequence>
<proteinExistence type="evidence at protein level"/>
<reference key="1">
    <citation type="journal article" date="1998" name="Nature">
        <title>Deciphering the biology of Mycobacterium tuberculosis from the complete genome sequence.</title>
        <authorList>
            <person name="Cole S.T."/>
            <person name="Brosch R."/>
            <person name="Parkhill J."/>
            <person name="Garnier T."/>
            <person name="Churcher C.M."/>
            <person name="Harris D.E."/>
            <person name="Gordon S.V."/>
            <person name="Eiglmeier K."/>
            <person name="Gas S."/>
            <person name="Barry C.E. III"/>
            <person name="Tekaia F."/>
            <person name="Badcock K."/>
            <person name="Basham D."/>
            <person name="Brown D."/>
            <person name="Chillingworth T."/>
            <person name="Connor R."/>
            <person name="Davies R.M."/>
            <person name="Devlin K."/>
            <person name="Feltwell T."/>
            <person name="Gentles S."/>
            <person name="Hamlin N."/>
            <person name="Holroyd S."/>
            <person name="Hornsby T."/>
            <person name="Jagels K."/>
            <person name="Krogh A."/>
            <person name="McLean J."/>
            <person name="Moule S."/>
            <person name="Murphy L.D."/>
            <person name="Oliver S."/>
            <person name="Osborne J."/>
            <person name="Quail M.A."/>
            <person name="Rajandream M.A."/>
            <person name="Rogers J."/>
            <person name="Rutter S."/>
            <person name="Seeger K."/>
            <person name="Skelton S."/>
            <person name="Squares S."/>
            <person name="Squares R."/>
            <person name="Sulston J.E."/>
            <person name="Taylor K."/>
            <person name="Whitehead S."/>
            <person name="Barrell B.G."/>
        </authorList>
    </citation>
    <scope>NUCLEOTIDE SEQUENCE [LARGE SCALE GENOMIC DNA]</scope>
    <source>
        <strain>ATCC 25618 / H37Rv</strain>
    </source>
</reference>
<reference key="2">
    <citation type="journal article" date="2001" name="Proc. Natl. Acad. Sci. U.S.A.">
        <title>Regulation of the Mycobacterium tuberculosis hypoxic response gene encoding alpha -crystallin.</title>
        <authorList>
            <person name="Sherman D.R."/>
            <person name="Voskuil M."/>
            <person name="Schnappinger D."/>
            <person name="Liao R."/>
            <person name="Harrell M.I."/>
            <person name="Schoolnik G.K."/>
        </authorList>
    </citation>
    <scope>INDUCTION BY HYPOXIA</scope>
    <source>
        <strain>ATCC 25618 / H37Rv</strain>
    </source>
</reference>
<reference key="3">
    <citation type="journal article" date="2003" name="J. Exp. Med.">
        <title>Inhibition of respiration by nitric oxide induces a Mycobacterium tuberculosis dormancy program.</title>
        <authorList>
            <person name="Voskuil M.I."/>
            <person name="Schnappinger D."/>
            <person name="Visconti K.C."/>
            <person name="Harrell M.I."/>
            <person name="Dolganov G.M."/>
            <person name="Sherman D.R."/>
            <person name="Schoolnik G.K."/>
        </authorList>
    </citation>
    <scope>INDUCTION BY NITRIC OXIDE (NO) AND BY HYPOXIA</scope>
    <scope>DORMANCY REGULON</scope>
    <source>
        <strain>ATCC 25618 / H37Rv</strain>
    </source>
</reference>
<reference key="4">
    <citation type="journal article" date="2006" name="Microbes Infect.">
        <title>Human T-cell responses to 25 novel antigens encoded by genes of the dormancy regulon of Mycobacterium tuberculosis.</title>
        <authorList>
            <person name="Leyten E.M."/>
            <person name="Lin M.Y."/>
            <person name="Franken K.L."/>
            <person name="Friggen A.H."/>
            <person name="Prins C."/>
            <person name="van Meijgaarden K.E."/>
            <person name="Voskuil M.I."/>
            <person name="Weldingh K."/>
            <person name="Andersen P."/>
            <person name="Schoolnik G.K."/>
            <person name="Arend S.M."/>
            <person name="Ottenhoff T.H."/>
            <person name="Klein M.R."/>
        </authorList>
    </citation>
    <scope>BIOTECHNOLOGY</scope>
</reference>
<reference key="5">
    <citation type="journal article" date="2008" name="BMC Syst. Biol.">
        <title>targetTB: a target identification pipeline for Mycobacterium tuberculosis through an interactome, reactome and genome-scale structural analysis.</title>
        <authorList>
            <person name="Raman K."/>
            <person name="Yeturu K."/>
            <person name="Chandra N."/>
        </authorList>
    </citation>
    <scope>IDENTIFICATION AS A DRUG TARGET [LARGE SCALE ANALYSIS]</scope>
</reference>
<reference key="6">
    <citation type="journal article" date="2008" name="Cell Host Microbe">
        <title>Mycobacterium tuberculosis senses host-derived carbon monoxide during macrophage infection.</title>
        <authorList>
            <person name="Shiloh M.U."/>
            <person name="Manzanillo P."/>
            <person name="Cox J.S."/>
        </authorList>
    </citation>
    <scope>INDUCTION BY CARBON MONOXIDE (CO)</scope>
    <source>
        <strain>ATCC 35801 / TMC 107 / Erdman</strain>
    </source>
</reference>
<reference key="7">
    <citation type="journal article" date="2008" name="J. Biol. Chem.">
        <title>Heme oxygenase-1-derived carbon monoxide induces the Mycobacterium tuberculosis dormancy regulon.</title>
        <authorList>
            <person name="Kumar A."/>
            <person name="Deshane J.S."/>
            <person name="Crossman D.K."/>
            <person name="Bolisetty S."/>
            <person name="Yan B.S."/>
            <person name="Kramnik I."/>
            <person name="Agarwal A."/>
            <person name="Steyn A.J."/>
        </authorList>
    </citation>
    <scope>INDUCTION BY CARBON MONOXIDE (CO)</scope>
    <scope>DORMANCY REGULON</scope>
    <source>
        <strain>ATCC 25618 / H37Rv</strain>
    </source>
</reference>
<reference key="8">
    <citation type="journal article" date="2010" name="PLoS ONE">
        <title>Prokaryotic ubiquitin-like protein (Pup) proteome of Mycobacterium tuberculosis.</title>
        <authorList>
            <person name="Festa R.A."/>
            <person name="McAllister F."/>
            <person name="Pearce M.J."/>
            <person name="Mintseris J."/>
            <person name="Burns K.E."/>
            <person name="Gygi S.P."/>
            <person name="Darwin K.H."/>
        </authorList>
    </citation>
    <scope>PUPYLATION AT LYS-283</scope>
    <scope>IDENTIFICATION BY MASS SPECTROMETRY</scope>
    <source>
        <strain>ATCC 25618 / H37Rv</strain>
    </source>
</reference>
<reference key="9">
    <citation type="journal article" date="2011" name="Mol. Cell. Proteomics">
        <title>Proteogenomic analysis of Mycobacterium tuberculosis by high resolution mass spectrometry.</title>
        <authorList>
            <person name="Kelkar D.S."/>
            <person name="Kumar D."/>
            <person name="Kumar P."/>
            <person name="Balakrishnan L."/>
            <person name="Muthusamy B."/>
            <person name="Yadav A.K."/>
            <person name="Shrivastava P."/>
            <person name="Marimuthu A."/>
            <person name="Anand S."/>
            <person name="Sundaram H."/>
            <person name="Kingsbury R."/>
            <person name="Harsha H.C."/>
            <person name="Nair B."/>
            <person name="Prasad T.S."/>
            <person name="Chauhan D.S."/>
            <person name="Katoch K."/>
            <person name="Katoch V.M."/>
            <person name="Kumar P."/>
            <person name="Chaerkady R."/>
            <person name="Ramachandran S."/>
            <person name="Dash D."/>
            <person name="Pandey A."/>
        </authorList>
    </citation>
    <scope>ACETYLATION [LARGE SCALE ANALYSIS] AT THR-2</scope>
    <scope>CLEAVAGE OF INITIATOR METHIONINE [LARGE SCALE ANALYSIS]</scope>
    <scope>IDENTIFICATION BY MASS SPECTROMETRY [LARGE SCALE ANALYSIS]</scope>
    <source>
        <strain>ATCC 25618 / H37Rv</strain>
    </source>
</reference>
<reference key="10">
    <citation type="journal article" date="2021" name="Int. J. Mol. Sci.">
        <title>Phosphofructokinases A and B from Mycobacterium tuberculosis display different catalytic properties and allosteric regulation.</title>
        <authorList>
            <person name="Snasel J."/>
            <person name="Machova I."/>
            <person name="Solinova V."/>
            <person name="Kasicka V."/>
            <person name="Krecmerova M."/>
            <person name="Pichova I."/>
        </authorList>
    </citation>
    <scope>FUNCTION</scope>
    <scope>CATALYTIC ACTIVITY</scope>
    <scope>COFACTOR</scope>
    <scope>ACTIVITY REGULATION</scope>
    <scope>BIOPHYSICOCHEMICAL PROPERTIES</scope>
    <scope>PATHWAY</scope>
</reference>
<keyword id="KW-0007">Acetylation</keyword>
<keyword id="KW-0067">ATP-binding</keyword>
<keyword id="KW-0324">Glycolysis</keyword>
<keyword id="KW-1017">Isopeptide bond</keyword>
<keyword id="KW-0418">Kinase</keyword>
<keyword id="KW-0460">Magnesium</keyword>
<keyword id="KW-0479">Metal-binding</keyword>
<keyword id="KW-0547">Nucleotide-binding</keyword>
<keyword id="KW-0630">Potassium</keyword>
<keyword id="KW-1185">Reference proteome</keyword>
<keyword id="KW-0808">Transferase</keyword>
<keyword id="KW-0832">Ubl conjugation</keyword>
<dbReference type="EC" id="2.7.1.11" evidence="8"/>
<dbReference type="EC" id="2.7.1.144" evidence="8"/>
<dbReference type="EMBL" id="AL123456">
    <property type="protein sequence ID" value="CCP44802.1"/>
    <property type="molecule type" value="Genomic_DNA"/>
</dbReference>
<dbReference type="PIR" id="D70942">
    <property type="entry name" value="D70942"/>
</dbReference>
<dbReference type="RefSeq" id="NP_216545.1">
    <property type="nucleotide sequence ID" value="NC_000962.3"/>
</dbReference>
<dbReference type="RefSeq" id="WP_003899139.1">
    <property type="nucleotide sequence ID" value="NZ_NVQJ01000046.1"/>
</dbReference>
<dbReference type="SMR" id="P9WID3"/>
<dbReference type="FunCoup" id="P9WID3">
    <property type="interactions" value="206"/>
</dbReference>
<dbReference type="STRING" id="83332.Rv2029c"/>
<dbReference type="iPTMnet" id="P9WID3"/>
<dbReference type="PaxDb" id="83332-Rv2029c"/>
<dbReference type="DNASU" id="887491"/>
<dbReference type="GeneID" id="887491"/>
<dbReference type="KEGG" id="mtu:Rv2029c"/>
<dbReference type="KEGG" id="mtv:RVBD_2029c"/>
<dbReference type="TubercuList" id="Rv2029c"/>
<dbReference type="eggNOG" id="COG1105">
    <property type="taxonomic scope" value="Bacteria"/>
</dbReference>
<dbReference type="InParanoid" id="P9WID3"/>
<dbReference type="OrthoDB" id="9801219at2"/>
<dbReference type="PhylomeDB" id="P9WID3"/>
<dbReference type="UniPathway" id="UPA00109">
    <property type="reaction ID" value="UER00182"/>
</dbReference>
<dbReference type="Proteomes" id="UP000001584">
    <property type="component" value="Chromosome"/>
</dbReference>
<dbReference type="GO" id="GO:0005829">
    <property type="term" value="C:cytosol"/>
    <property type="evidence" value="ECO:0000318"/>
    <property type="project" value="GO_Central"/>
</dbReference>
<dbReference type="GO" id="GO:0003872">
    <property type="term" value="F:6-phosphofructokinase activity"/>
    <property type="evidence" value="ECO:0000318"/>
    <property type="project" value="GO_Central"/>
</dbReference>
<dbReference type="GO" id="GO:0005524">
    <property type="term" value="F:ATP binding"/>
    <property type="evidence" value="ECO:0007669"/>
    <property type="project" value="UniProtKB-KW"/>
</dbReference>
<dbReference type="GO" id="GO:0046872">
    <property type="term" value="F:metal ion binding"/>
    <property type="evidence" value="ECO:0007669"/>
    <property type="project" value="UniProtKB-KW"/>
</dbReference>
<dbReference type="GO" id="GO:0009024">
    <property type="term" value="F:tagatose-6-phosphate kinase activity"/>
    <property type="evidence" value="ECO:0007669"/>
    <property type="project" value="RHEA"/>
</dbReference>
<dbReference type="CDD" id="cd01164">
    <property type="entry name" value="FruK_PfkB_like"/>
    <property type="match status" value="1"/>
</dbReference>
<dbReference type="FunFam" id="3.40.1190.20:FF:000074">
    <property type="entry name" value="6-phosphofructokinase pfkb (Phosphohexokinase) (Phosphofructokinase)"/>
    <property type="match status" value="1"/>
</dbReference>
<dbReference type="Gene3D" id="3.40.1190.20">
    <property type="match status" value="1"/>
</dbReference>
<dbReference type="InterPro" id="IPR002173">
    <property type="entry name" value="Carboh/pur_kinase_PfkB_CS"/>
</dbReference>
<dbReference type="InterPro" id="IPR011611">
    <property type="entry name" value="PfkB_dom"/>
</dbReference>
<dbReference type="InterPro" id="IPR029056">
    <property type="entry name" value="Ribokinase-like"/>
</dbReference>
<dbReference type="InterPro" id="IPR017583">
    <property type="entry name" value="Tagatose/fructose_Pkinase"/>
</dbReference>
<dbReference type="NCBIfam" id="TIGR03168">
    <property type="entry name" value="1-PFK"/>
    <property type="match status" value="1"/>
</dbReference>
<dbReference type="PANTHER" id="PTHR46566">
    <property type="entry name" value="1-PHOSPHOFRUCTOKINASE-RELATED"/>
    <property type="match status" value="1"/>
</dbReference>
<dbReference type="PANTHER" id="PTHR46566:SF2">
    <property type="entry name" value="ATP-DEPENDENT 6-PHOSPHOFRUCTOKINASE ISOZYME 2"/>
    <property type="match status" value="1"/>
</dbReference>
<dbReference type="Pfam" id="PF00294">
    <property type="entry name" value="PfkB"/>
    <property type="match status" value="1"/>
</dbReference>
<dbReference type="PIRSF" id="PIRSF000535">
    <property type="entry name" value="1PFK/6PFK/LacC"/>
    <property type="match status" value="1"/>
</dbReference>
<dbReference type="SUPFAM" id="SSF53613">
    <property type="entry name" value="Ribokinase-like"/>
    <property type="match status" value="1"/>
</dbReference>
<dbReference type="PROSITE" id="PS00583">
    <property type="entry name" value="PFKB_KINASES_1"/>
    <property type="match status" value="1"/>
</dbReference>
<accession>P9WID3</accession>
<accession>L0T8F1</accession>
<accession>O86352</accession>
<accession>Q7D7L4</accession>
<comment type="function">
    <text evidence="8">Catalyzes the phosphorylation of D-fructose 6-phosphate to fructose 1,6-bisphosphate by ATP, the first committing step of glycolysis (PubMed:33540748). Can also catalyze the phosphorylation of tagatose-6-phosphate. The catalytic efficiency with tagatose-6-phosphate is about 1.8 times lower than that with fructose 6-phosphate (PubMed:33540748). Can use phosphate donors other than ATP (GTP and ITP), with lower efficiency (PubMed:33540748). In addition, can catalyze the reverse gluconeogenic reaction, albeit with low efficiency (PubMed:33540748). May support and maintain basic glycolysis and metabolic fluxes during conditions inhibiting PfkA (PubMed:33540748).</text>
</comment>
<comment type="catalytic activity">
    <reaction evidence="8">
        <text>beta-D-fructose 6-phosphate + ATP = beta-D-fructose 1,6-bisphosphate + ADP + H(+)</text>
        <dbReference type="Rhea" id="RHEA:16109"/>
        <dbReference type="ChEBI" id="CHEBI:15378"/>
        <dbReference type="ChEBI" id="CHEBI:30616"/>
        <dbReference type="ChEBI" id="CHEBI:32966"/>
        <dbReference type="ChEBI" id="CHEBI:57634"/>
        <dbReference type="ChEBI" id="CHEBI:456216"/>
        <dbReference type="EC" id="2.7.1.11"/>
    </reaction>
    <physiologicalReaction direction="left-to-right" evidence="8">
        <dbReference type="Rhea" id="RHEA:16110"/>
    </physiologicalReaction>
    <physiologicalReaction direction="right-to-left" evidence="8">
        <dbReference type="Rhea" id="RHEA:16111"/>
    </physiologicalReaction>
</comment>
<comment type="catalytic activity">
    <reaction evidence="8">
        <text>D-tagatofuranose 6-phosphate + ATP = D-tagatofuranose 1,6-bisphosphate + ADP + H(+)</text>
        <dbReference type="Rhea" id="RHEA:12420"/>
        <dbReference type="ChEBI" id="CHEBI:15378"/>
        <dbReference type="ChEBI" id="CHEBI:30616"/>
        <dbReference type="ChEBI" id="CHEBI:58694"/>
        <dbReference type="ChEBI" id="CHEBI:58695"/>
        <dbReference type="ChEBI" id="CHEBI:456216"/>
        <dbReference type="EC" id="2.7.1.144"/>
    </reaction>
</comment>
<comment type="cofactor">
    <cofactor evidence="8">
        <name>Mg(2+)</name>
        <dbReference type="ChEBI" id="CHEBI:18420"/>
    </cofactor>
    <text evidence="8">The magnesium does not function as an allosteric effector but is essential for glycolytic reaction.</text>
</comment>
<comment type="activity regulation">
    <text evidence="8">Not inhibited by an excess of substrates and common allosteric inhibitors. Inhibited by high concentrations of the reaction products, fructose 1,6-bisphosphate and ADP.</text>
</comment>
<comment type="biophysicochemical properties">
    <kinetics>
        <KM evidence="8">0.04 mM for fructose 6-phosphate</KM>
        <KM evidence="8">0.052 mM for ATP</KM>
        <KM evidence="8">0.09 mM for tagatose-6-phosphate</KM>
        <KM evidence="8">17.5 mM for fructose 1,6-bisphosphate (for gluconeogenic reaction)</KM>
        <KM evidence="8">12.9 mM for ADP (for gluconeogenic reaction)</KM>
        <KM evidence="8">0.27 mM for IDP (for gluconeogenic reaction)</KM>
        <KM evidence="8">0.28 mM for GDP (for gluconeogenic reaction)</KM>
        <Vmax evidence="8">1.2 umol/min/mg enzyme with fructose 6-phosphate as substrate</Vmax>
        <Vmax evidence="8">0.8 umol/min/mg enzyme with ATP as substrate</Vmax>
        <Vmax evidence="8">1.5 umol/min/mg enzyme with tagatose-6-phosphate as substrate</Vmax>
        <Vmax evidence="8">0.39 umol/min/mg enzyme with fructose 1,6-bisphosphate as substrate (for gluconeogenic reaction)</Vmax>
        <Vmax evidence="8">3.6 umol/min/mg enzyme with ADP as substrate (for gluconeogenic reaction)</Vmax>
        <Vmax evidence="8">0.37 umol/min/mg enzyme with IDP as substrate (for gluconeogenic reaction)</Vmax>
        <Vmax evidence="8">0.32 umol/min/mg enzyme with GDP as substrate (for gluconeogenic reaction)</Vmax>
    </kinetics>
</comment>
<comment type="pathway">
    <text evidence="11">Carbohydrate degradation; glycolysis; D-glyceraldehyde 3-phosphate and glycerone phosphate from D-glucose: step 3/4.</text>
</comment>
<comment type="induction">
    <text evidence="2 3 5 6">A member of the dormancy regulon. Induced in response to reduced oxygen tension (hypoxia), low levels of nitric oxide (NO) and carbon monoxide (CO). It is hoped that this regulon will give insight into the latent, or dormant phase of infection.</text>
</comment>
<comment type="biotechnology">
    <text evidence="4">Has strong T-cell and IFN-gamma inducing capacity in human tuberculin skin test positive patients, indicating this might be a good vaccine candidate.</text>
</comment>
<comment type="miscellaneous">
    <text evidence="8">Activity of PfkB is tenfold lower than that of PfkA (PubMed:33540748). Activity with tagatose-6-phosphate suggests that PfkA and/or PfkB may substitute for tagatose-6-phosphate kinase and further support glycolysis (PubMed:33540748).</text>
</comment>
<comment type="miscellaneous">
    <text>Was identified as a high-confidence drug target.</text>
</comment>
<comment type="similarity">
    <text evidence="10">Belongs to the carbohydrate kinase PfkB family.</text>
</comment>
<name>PFKB_MYCTU</name>
<protein>
    <recommendedName>
        <fullName evidence="10">ATP-dependent 6-phosphofructokinase isozyme 2</fullName>
        <shortName>ATP-PFK 2</shortName>
        <shortName>Phosphofructokinase 2</shortName>
        <ecNumber evidence="8">2.7.1.11</ecNumber>
    </recommendedName>
    <alternativeName>
        <fullName evidence="9">Phosphofructokinase B</fullName>
    </alternativeName>
    <alternativeName>
        <fullName>Phosphohexokinase 2</fullName>
    </alternativeName>
    <alternativeName>
        <fullName evidence="10">Tagatose-6-phosphate kinase</fullName>
        <ecNumber evidence="8">2.7.1.144</ecNumber>
    </alternativeName>
</protein>
<gene>
    <name evidence="9" type="primary">pfkB</name>
    <name type="ordered locus">Rv2029c</name>
</gene>
<feature type="initiator methionine" description="Removed" evidence="12">
    <location>
        <position position="1"/>
    </location>
</feature>
<feature type="chain" id="PRO_0000392912" description="ATP-dependent 6-phosphofructokinase isozyme 2">
    <location>
        <begin position="2"/>
        <end position="339"/>
    </location>
</feature>
<feature type="active site" evidence="1">
    <location>
        <position position="265"/>
    </location>
</feature>
<feature type="binding site" evidence="1">
    <location>
        <begin position="22"/>
        <end position="24"/>
    </location>
    <ligand>
        <name>substrate</name>
    </ligand>
</feature>
<feature type="binding site" evidence="1">
    <location>
        <begin position="37"/>
        <end position="39"/>
    </location>
    <ligand>
        <name>substrate</name>
    </ligand>
</feature>
<feature type="binding site" evidence="1">
    <location>
        <position position="37"/>
    </location>
    <ligand>
        <name>ATP</name>
        <dbReference type="ChEBI" id="CHEBI:30616"/>
        <note>ligand shared between dimeric partners</note>
    </ligand>
</feature>
<feature type="binding site" evidence="1">
    <location>
        <begin position="49"/>
        <end position="53"/>
    </location>
    <ligand>
        <name>substrate</name>
    </ligand>
</feature>
<feature type="binding site" evidence="1">
    <location>
        <begin position="100"/>
        <end position="102"/>
    </location>
    <ligand>
        <name>substrate</name>
    </ligand>
</feature>
<feature type="binding site" evidence="1">
    <location>
        <position position="150"/>
    </location>
    <ligand>
        <name>substrate</name>
    </ligand>
</feature>
<feature type="binding site" description="in other chain" evidence="1">
    <location>
        <begin position="194"/>
        <end position="196"/>
    </location>
    <ligand>
        <name>ATP</name>
        <dbReference type="ChEBI" id="CHEBI:30616"/>
        <note>ligand shared between dimeric partners</note>
    </ligand>
</feature>
<feature type="binding site" evidence="1">
    <location>
        <position position="199"/>
    </location>
    <ligand>
        <name>Mg(2+)</name>
        <dbReference type="ChEBI" id="CHEBI:18420"/>
        <note>catalytic</note>
    </ligand>
</feature>
<feature type="binding site" description="in other chain" evidence="1">
    <location>
        <begin position="233"/>
        <end position="238"/>
    </location>
    <ligand>
        <name>ATP</name>
        <dbReference type="ChEBI" id="CHEBI:30616"/>
        <note>ligand shared between dimeric partners</note>
    </ligand>
</feature>
<feature type="binding site" evidence="1">
    <location>
        <position position="259"/>
    </location>
    <ligand>
        <name>K(+)</name>
        <dbReference type="ChEBI" id="CHEBI:29103"/>
    </ligand>
</feature>
<feature type="binding site" evidence="1">
    <location>
        <position position="261"/>
    </location>
    <ligand>
        <name>K(+)</name>
        <dbReference type="ChEBI" id="CHEBI:29103"/>
    </ligand>
</feature>
<feature type="binding site" evidence="1">
    <location>
        <position position="265"/>
    </location>
    <ligand>
        <name>substrate</name>
    </ligand>
</feature>
<feature type="binding site" evidence="1">
    <location>
        <position position="295"/>
    </location>
    <ligand>
        <name>K(+)</name>
        <dbReference type="ChEBI" id="CHEBI:29103"/>
    </ligand>
</feature>
<feature type="binding site" evidence="1">
    <location>
        <position position="298"/>
    </location>
    <ligand>
        <name>K(+)</name>
        <dbReference type="ChEBI" id="CHEBI:29103"/>
    </ligand>
</feature>
<feature type="binding site" evidence="1">
    <location>
        <position position="300"/>
    </location>
    <ligand>
        <name>K(+)</name>
        <dbReference type="ChEBI" id="CHEBI:29103"/>
    </ligand>
</feature>
<feature type="binding site" evidence="1">
    <location>
        <position position="302"/>
    </location>
    <ligand>
        <name>K(+)</name>
        <dbReference type="ChEBI" id="CHEBI:29103"/>
    </ligand>
</feature>
<feature type="modified residue" description="N-acetylthreonine" evidence="12">
    <location>
        <position position="2"/>
    </location>
</feature>
<feature type="cross-link" description="Isoglutamyl lysine isopeptide (Lys-Gln) (interchain with Q-Cter in protein Pup)" evidence="7">
    <location>
        <position position="283"/>
    </location>
</feature>